<sequence>MAIKKYKPITNGRRNMTSLDFAEITKTTPEKSLLKPLPKKAGRNNQGKLTVRHHGGGHKRQYRVIDFKRNKDGINAKVDSIQYDPNRSANIALVVYADGEKRYIIAPKGLEVGQIVESGAEADIKVGNALPLQNIPVGTVVHNIELKPGKGGQIARSAGASAQVLGKEGKYVLIRLRSGEVRMILSTCRATIGQVGNLQHELVNVGKAGRSRWKGIRPTVRGSVMNPNDHPHGGGEGRAPIGRPSPMSPWGKPTLGKKTRRGKKSSDKLIVRGRKKK</sequence>
<proteinExistence type="inferred from homology"/>
<keyword id="KW-0687">Ribonucleoprotein</keyword>
<keyword id="KW-0689">Ribosomal protein</keyword>
<keyword id="KW-0694">RNA-binding</keyword>
<keyword id="KW-0699">rRNA-binding</keyword>
<organism>
    <name type="scientific">Staphylococcus aureus (strain Mu50 / ATCC 700699)</name>
    <dbReference type="NCBI Taxonomy" id="158878"/>
    <lineage>
        <taxon>Bacteria</taxon>
        <taxon>Bacillati</taxon>
        <taxon>Bacillota</taxon>
        <taxon>Bacilli</taxon>
        <taxon>Bacillales</taxon>
        <taxon>Staphylococcaceae</taxon>
        <taxon>Staphylococcus</taxon>
    </lineage>
</organism>
<feature type="chain" id="PRO_0000129615" description="Large ribosomal subunit protein uL2">
    <location>
        <begin position="1"/>
        <end position="277"/>
    </location>
</feature>
<feature type="region of interest" description="Disordered" evidence="2">
    <location>
        <begin position="36"/>
        <end position="55"/>
    </location>
</feature>
<feature type="region of interest" description="Disordered" evidence="2">
    <location>
        <begin position="213"/>
        <end position="277"/>
    </location>
</feature>
<evidence type="ECO:0000255" key="1">
    <source>
        <dbReference type="HAMAP-Rule" id="MF_01320"/>
    </source>
</evidence>
<evidence type="ECO:0000256" key="2">
    <source>
        <dbReference type="SAM" id="MobiDB-lite"/>
    </source>
</evidence>
<evidence type="ECO:0000305" key="3"/>
<dbReference type="EMBL" id="BA000017">
    <property type="protein sequence ID" value="BAB58409.1"/>
    <property type="molecule type" value="Genomic_DNA"/>
</dbReference>
<dbReference type="RefSeq" id="WP_000985472.1">
    <property type="nucleotide sequence ID" value="NC_002758.2"/>
</dbReference>
<dbReference type="SMR" id="P60431"/>
<dbReference type="GeneID" id="98346559"/>
<dbReference type="KEGG" id="sav:SAV2247"/>
<dbReference type="HOGENOM" id="CLU_036235_2_1_9"/>
<dbReference type="PhylomeDB" id="P60431"/>
<dbReference type="Proteomes" id="UP000002481">
    <property type="component" value="Chromosome"/>
</dbReference>
<dbReference type="GO" id="GO:0015934">
    <property type="term" value="C:large ribosomal subunit"/>
    <property type="evidence" value="ECO:0007669"/>
    <property type="project" value="InterPro"/>
</dbReference>
<dbReference type="GO" id="GO:0019843">
    <property type="term" value="F:rRNA binding"/>
    <property type="evidence" value="ECO:0007669"/>
    <property type="project" value="UniProtKB-UniRule"/>
</dbReference>
<dbReference type="GO" id="GO:0003735">
    <property type="term" value="F:structural constituent of ribosome"/>
    <property type="evidence" value="ECO:0007669"/>
    <property type="project" value="InterPro"/>
</dbReference>
<dbReference type="GO" id="GO:0016740">
    <property type="term" value="F:transferase activity"/>
    <property type="evidence" value="ECO:0007669"/>
    <property type="project" value="InterPro"/>
</dbReference>
<dbReference type="GO" id="GO:0002181">
    <property type="term" value="P:cytoplasmic translation"/>
    <property type="evidence" value="ECO:0007669"/>
    <property type="project" value="TreeGrafter"/>
</dbReference>
<dbReference type="FunFam" id="2.30.30.30:FF:000001">
    <property type="entry name" value="50S ribosomal protein L2"/>
    <property type="match status" value="1"/>
</dbReference>
<dbReference type="FunFam" id="2.40.50.140:FF:000003">
    <property type="entry name" value="50S ribosomal protein L2"/>
    <property type="match status" value="1"/>
</dbReference>
<dbReference type="FunFam" id="4.10.950.10:FF:000001">
    <property type="entry name" value="50S ribosomal protein L2"/>
    <property type="match status" value="1"/>
</dbReference>
<dbReference type="Gene3D" id="2.30.30.30">
    <property type="match status" value="1"/>
</dbReference>
<dbReference type="Gene3D" id="2.40.50.140">
    <property type="entry name" value="Nucleic acid-binding proteins"/>
    <property type="match status" value="1"/>
</dbReference>
<dbReference type="Gene3D" id="4.10.950.10">
    <property type="entry name" value="Ribosomal protein L2, domain 3"/>
    <property type="match status" value="1"/>
</dbReference>
<dbReference type="HAMAP" id="MF_01320_B">
    <property type="entry name" value="Ribosomal_uL2_B"/>
    <property type="match status" value="1"/>
</dbReference>
<dbReference type="InterPro" id="IPR012340">
    <property type="entry name" value="NA-bd_OB-fold"/>
</dbReference>
<dbReference type="InterPro" id="IPR014722">
    <property type="entry name" value="Rib_uL2_dom2"/>
</dbReference>
<dbReference type="InterPro" id="IPR002171">
    <property type="entry name" value="Ribosomal_uL2"/>
</dbReference>
<dbReference type="InterPro" id="IPR005880">
    <property type="entry name" value="Ribosomal_uL2_bac/org-type"/>
</dbReference>
<dbReference type="InterPro" id="IPR022669">
    <property type="entry name" value="Ribosomal_uL2_C"/>
</dbReference>
<dbReference type="InterPro" id="IPR022671">
    <property type="entry name" value="Ribosomal_uL2_CS"/>
</dbReference>
<dbReference type="InterPro" id="IPR014726">
    <property type="entry name" value="Ribosomal_uL2_dom3"/>
</dbReference>
<dbReference type="InterPro" id="IPR022666">
    <property type="entry name" value="Ribosomal_uL2_RNA-bd_dom"/>
</dbReference>
<dbReference type="InterPro" id="IPR008991">
    <property type="entry name" value="Translation_prot_SH3-like_sf"/>
</dbReference>
<dbReference type="NCBIfam" id="TIGR01171">
    <property type="entry name" value="rplB_bact"/>
    <property type="match status" value="1"/>
</dbReference>
<dbReference type="PANTHER" id="PTHR13691:SF5">
    <property type="entry name" value="LARGE RIBOSOMAL SUBUNIT PROTEIN UL2M"/>
    <property type="match status" value="1"/>
</dbReference>
<dbReference type="PANTHER" id="PTHR13691">
    <property type="entry name" value="RIBOSOMAL PROTEIN L2"/>
    <property type="match status" value="1"/>
</dbReference>
<dbReference type="Pfam" id="PF00181">
    <property type="entry name" value="Ribosomal_L2"/>
    <property type="match status" value="1"/>
</dbReference>
<dbReference type="Pfam" id="PF03947">
    <property type="entry name" value="Ribosomal_L2_C"/>
    <property type="match status" value="1"/>
</dbReference>
<dbReference type="PIRSF" id="PIRSF002158">
    <property type="entry name" value="Ribosomal_L2"/>
    <property type="match status" value="1"/>
</dbReference>
<dbReference type="SMART" id="SM01383">
    <property type="entry name" value="Ribosomal_L2"/>
    <property type="match status" value="1"/>
</dbReference>
<dbReference type="SMART" id="SM01382">
    <property type="entry name" value="Ribosomal_L2_C"/>
    <property type="match status" value="1"/>
</dbReference>
<dbReference type="SUPFAM" id="SSF50249">
    <property type="entry name" value="Nucleic acid-binding proteins"/>
    <property type="match status" value="1"/>
</dbReference>
<dbReference type="SUPFAM" id="SSF50104">
    <property type="entry name" value="Translation proteins SH3-like domain"/>
    <property type="match status" value="1"/>
</dbReference>
<dbReference type="PROSITE" id="PS00467">
    <property type="entry name" value="RIBOSOMAL_L2"/>
    <property type="match status" value="1"/>
</dbReference>
<gene>
    <name evidence="1" type="primary">rplB</name>
    <name type="ordered locus">SAV2247</name>
</gene>
<accession>P60431</accession>
<accession>Q99S24</accession>
<accession>Q9AJ03</accession>
<protein>
    <recommendedName>
        <fullName evidence="1">Large ribosomal subunit protein uL2</fullName>
    </recommendedName>
    <alternativeName>
        <fullName evidence="3">50S ribosomal protein L2</fullName>
    </alternativeName>
</protein>
<reference key="1">
    <citation type="journal article" date="2001" name="Lancet">
        <title>Whole genome sequencing of meticillin-resistant Staphylococcus aureus.</title>
        <authorList>
            <person name="Kuroda M."/>
            <person name="Ohta T."/>
            <person name="Uchiyama I."/>
            <person name="Baba T."/>
            <person name="Yuzawa H."/>
            <person name="Kobayashi I."/>
            <person name="Cui L."/>
            <person name="Oguchi A."/>
            <person name="Aoki K."/>
            <person name="Nagai Y."/>
            <person name="Lian J.-Q."/>
            <person name="Ito T."/>
            <person name="Kanamori M."/>
            <person name="Matsumaru H."/>
            <person name="Maruyama A."/>
            <person name="Murakami H."/>
            <person name="Hosoyama A."/>
            <person name="Mizutani-Ui Y."/>
            <person name="Takahashi N.K."/>
            <person name="Sawano T."/>
            <person name="Inoue R."/>
            <person name="Kaito C."/>
            <person name="Sekimizu K."/>
            <person name="Hirakawa H."/>
            <person name="Kuhara S."/>
            <person name="Goto S."/>
            <person name="Yabuzaki J."/>
            <person name="Kanehisa M."/>
            <person name="Yamashita A."/>
            <person name="Oshima K."/>
            <person name="Furuya K."/>
            <person name="Yoshino C."/>
            <person name="Shiba T."/>
            <person name="Hattori M."/>
            <person name="Ogasawara N."/>
            <person name="Hayashi H."/>
            <person name="Hiramatsu K."/>
        </authorList>
    </citation>
    <scope>NUCLEOTIDE SEQUENCE [LARGE SCALE GENOMIC DNA]</scope>
    <source>
        <strain>Mu50 / ATCC 700699</strain>
    </source>
</reference>
<comment type="function">
    <text evidence="1">One of the primary rRNA binding proteins. Required for association of the 30S and 50S subunits to form the 70S ribosome, for tRNA binding and peptide bond formation. It has been suggested to have peptidyltransferase activity; this is somewhat controversial. Makes several contacts with the 16S rRNA in the 70S ribosome.</text>
</comment>
<comment type="subunit">
    <text evidence="1">Part of the 50S ribosomal subunit. Forms a bridge to the 30S subunit in the 70S ribosome.</text>
</comment>
<comment type="similarity">
    <text evidence="1">Belongs to the universal ribosomal protein uL2 family.</text>
</comment>
<name>RL2_STAAM</name>